<protein>
    <recommendedName>
        <fullName>U7-lycotoxin-Ls1e</fullName>
    </recommendedName>
    <alternativeName>
        <fullName>Toxin-like structure LSTX-G4</fullName>
    </alternativeName>
</protein>
<dbReference type="EMBL" id="EU926048">
    <property type="protein sequence ID" value="ACI41380.1"/>
    <property type="molecule type" value="mRNA"/>
</dbReference>
<dbReference type="EMBL" id="FM864052">
    <property type="protein sequence ID" value="CAS03649.1"/>
    <property type="molecule type" value="mRNA"/>
</dbReference>
<dbReference type="SMR" id="B6DCW4"/>
<dbReference type="ArachnoServer" id="AS000987">
    <property type="toxin name" value="U7-lycotoxin-Ls1e"/>
</dbReference>
<dbReference type="GO" id="GO:0005576">
    <property type="term" value="C:extracellular region"/>
    <property type="evidence" value="ECO:0007669"/>
    <property type="project" value="UniProtKB-SubCell"/>
</dbReference>
<dbReference type="GO" id="GO:0090729">
    <property type="term" value="F:toxin activity"/>
    <property type="evidence" value="ECO:0007669"/>
    <property type="project" value="UniProtKB-KW"/>
</dbReference>
<dbReference type="InterPro" id="IPR019553">
    <property type="entry name" value="Spider_toxin_CSTX_knottin"/>
</dbReference>
<dbReference type="Pfam" id="PF10530">
    <property type="entry name" value="Toxin_35"/>
    <property type="match status" value="1"/>
</dbReference>
<sequence>MKLIIFTGLALLLIVSLIDVEAQNEGACLPRGSVCTTNHASCCSKLSCDCYRRFEKGVEKGQKCWCIPTGLRYSKEKE</sequence>
<organism>
    <name type="scientific">Lycosa singoriensis</name>
    <name type="common">Wolf spider</name>
    <name type="synonym">Aranea singoriensis</name>
    <dbReference type="NCBI Taxonomy" id="434756"/>
    <lineage>
        <taxon>Eukaryota</taxon>
        <taxon>Metazoa</taxon>
        <taxon>Ecdysozoa</taxon>
        <taxon>Arthropoda</taxon>
        <taxon>Chelicerata</taxon>
        <taxon>Arachnida</taxon>
        <taxon>Araneae</taxon>
        <taxon>Araneomorphae</taxon>
        <taxon>Entelegynae</taxon>
        <taxon>Lycosoidea</taxon>
        <taxon>Lycosidae</taxon>
        <taxon>Lycosa</taxon>
    </lineage>
</organism>
<name>TX704_LYCSI</name>
<proteinExistence type="evidence at transcript level"/>
<comment type="subcellular location">
    <subcellularLocation>
        <location evidence="1">Secreted</location>
    </subcellularLocation>
</comment>
<comment type="tissue specificity">
    <text>Expressed by the venom gland.</text>
</comment>
<comment type="PTM">
    <text evidence="1">Contains 4 disulfide bonds.</text>
</comment>
<comment type="similarity">
    <text evidence="3">Belongs to the neurotoxin 19 (CSTX) family. 07 (U7-Lctx) subfamily.</text>
</comment>
<accession>B6DCW4</accession>
<feature type="signal peptide" evidence="2">
    <location>
        <begin position="1"/>
        <end position="22"/>
    </location>
</feature>
<feature type="propeptide" id="PRO_0000401749" evidence="1">
    <location>
        <begin position="23"/>
        <end position="26"/>
    </location>
</feature>
<feature type="chain" id="PRO_0000401750" description="U7-lycotoxin-Ls1e">
    <location>
        <begin position="27"/>
        <end position="78"/>
    </location>
</feature>
<evidence type="ECO:0000250" key="1"/>
<evidence type="ECO:0000255" key="2"/>
<evidence type="ECO:0000305" key="3"/>
<reference key="1">
    <citation type="journal article" date="2010" name="Zoology">
        <title>Transcriptome analysis of the venom glands of the Chinese wolf spider Lycosa singoriensis.</title>
        <authorList>
            <person name="Zhang Y."/>
            <person name="Chen J."/>
            <person name="Tang X."/>
            <person name="Wang F."/>
            <person name="Jiang L."/>
            <person name="Xiong X."/>
            <person name="Wang M."/>
            <person name="Rong M."/>
            <person name="Liu Z."/>
            <person name="Liang S."/>
        </authorList>
    </citation>
    <scope>NUCLEOTIDE SEQUENCE [LARGE SCALE MRNA]</scope>
    <source>
        <tissue>Venom gland</tissue>
    </source>
</reference>
<keyword id="KW-1015">Disulfide bond</keyword>
<keyword id="KW-0964">Secreted</keyword>
<keyword id="KW-0732">Signal</keyword>
<keyword id="KW-0800">Toxin</keyword>